<name>VINT_LAMBD</name>
<reference key="1">
    <citation type="journal article" date="1982" name="J. Mol. Biol.">
        <title>Nucleotide sequence of bacteriophage lambda DNA.</title>
        <authorList>
            <person name="Sanger F."/>
            <person name="Coulson A.R."/>
            <person name="Hong G.F."/>
            <person name="Hill D.F."/>
            <person name="Petersen G.B."/>
        </authorList>
    </citation>
    <scope>NUCLEOTIDE SEQUENCE [LARGE SCALE GENOMIC DNA]</scope>
</reference>
<reference key="2">
    <citation type="journal article" date="1980" name="Proc. Natl. Acad. Sci. U.S.A.">
        <title>Site-specific recombination functions of bacteriophage lambda: DNA sequence of regulatory regions and overlapping structural genes for Int and Xis.</title>
        <authorList>
            <person name="Hoess R.H."/>
            <person name="Foeller C."/>
            <person name="Bidwell K."/>
            <person name="Landy A."/>
        </authorList>
    </citation>
    <scope>NUCLEOTIDE SEQUENCE [GENOMIC DNA]</scope>
</reference>
<reference key="3">
    <citation type="journal article" date="1980" name="Nucleic Acids Res.">
        <title>DNA sequence of the int-xis-Pi region of the bacteriophage lambda; overlap of the int and xis genes.</title>
        <authorList>
            <person name="Davies R.W."/>
        </authorList>
    </citation>
    <scope>NUCLEOTIDE SEQUENCE [GENOMIC DNA]</scope>
</reference>
<reference key="4">
    <citation type="journal article" date="2003" name="Proc. Natl. Acad. Sci. U.S.A.">
        <title>Identification of the lambda integrase surface that interacts with Xis reveals a residue that is also critical for Int dimer formation.</title>
        <authorList>
            <person name="Warren D."/>
            <person name="Sam M.D."/>
            <person name="Manley K."/>
            <person name="Sarkar D."/>
            <person name="Lee S.Y."/>
            <person name="Abbani M."/>
            <person name="Wojciak J.M."/>
            <person name="Clubb R.T."/>
            <person name="Landy A."/>
        </authorList>
    </citation>
    <scope>INTERACTION WITH THE EXCISIONASE</scope>
    <scope>MUTAGENESIS OF GLU-47</scope>
</reference>
<reference key="5">
    <citation type="journal article" date="2005" name="Curr. Biol.">
        <title>Lambda integrase: armed for recombination.</title>
        <authorList>
            <person name="Van Duyne G.D."/>
        </authorList>
    </citation>
    <scope>REVIEW</scope>
    <scope>FUNCTION</scope>
</reference>
<reference key="6">
    <citation type="journal article" date="2014" name="Proc. Natl. Acad. Sci. U.S.A.">
        <title>Nucleoprotein architectures regulating the directionality of viral integration and excision.</title>
        <authorList>
            <person name="Seah N.E."/>
            <person name="Warren D."/>
            <person name="Tong W."/>
            <person name="Laxmikanthan G."/>
            <person name="Van Duyne G.D."/>
            <person name="Landy A."/>
        </authorList>
    </citation>
    <scope>IDENTIFICATION IN THE EXCISION COMPLEX</scope>
    <scope>SUBUNIT</scope>
</reference>
<reference key="7">
    <citation type="journal article" date="1997" name="Science">
        <title>Flexibility in DNA recombination: structure of the lambda integrase catalytic core.</title>
        <authorList>
            <person name="Kwon H.J."/>
            <person name="Tirumalai R."/>
            <person name="Landy A."/>
            <person name="Ellenberger T."/>
        </authorList>
    </citation>
    <scope>X-RAY CRYSTALLOGRAPHY (1.9 ANGSTROMS) OF 177-356</scope>
</reference>
<reference key="8">
    <citation type="journal article" date="2002" name="Proc. Natl. Acad. Sci. U.S.A.">
        <title>Arm-site binding by lambda-integrase: solution structure and functional characterization of its amino-terminal domain.</title>
        <authorList>
            <person name="Wojciak J.M."/>
            <person name="Sarkar D."/>
            <person name="Landy A."/>
            <person name="Clubb R.T."/>
        </authorList>
    </citation>
    <scope>STRUCTURE BY NMR OF 1-64</scope>
</reference>
<reference key="9">
    <citation type="journal article" date="2003" name="Mol. Cell">
        <title>A conformational switch controls the DNA cleavage activity of lambda integrase.</title>
        <authorList>
            <person name="Aihara H."/>
            <person name="Kwon H.J."/>
            <person name="Nunes-Duby S.E."/>
            <person name="Landy A."/>
            <person name="Ellenberger T."/>
        </authorList>
    </citation>
    <scope>X-RAY CRYSTALLOGRAPHY (2.95 ANGSTROMS) OF 74-356 IN COMPLEX WITH PHOSPHOTYROSINE</scope>
</reference>
<reference key="10">
    <citation type="journal article" date="2005" name="Nature">
        <title>A structural basis for allosteric control of DNA recombination by lambda integrase.</title>
        <authorList>
            <person name="Biswas T."/>
            <person name="Aihara H."/>
            <person name="Radman-Livaja M."/>
            <person name="Filman D."/>
            <person name="Landy A."/>
            <person name="Ellenberger T."/>
        </authorList>
    </citation>
    <scope>X-RAY CRYSTALLOGRAPHY (2.80 ANGSTROMS) OF 74-356 IN COMPLEX WITH PHOSPHOTYROSINE</scope>
    <scope>ACTIVE SITE</scope>
</reference>
<reference key="11">
    <citation type="journal article" date="2008" name="Acta Crystallogr. F">
        <title>Crystallization and structure determination of the core-binding domain of bacteriophage lambda integrase.</title>
        <authorList>
            <person name="Kamadurai H.B."/>
            <person name="Jain R."/>
            <person name="Foster M.P."/>
        </authorList>
    </citation>
    <scope>X-RAY CRYSTALLOGRAPHY (2.00 ANGSTROMS) OF 75-176</scope>
</reference>
<reference key="12">
    <citation type="journal article" date="2009" name="J. Mol. Biol.">
        <title>NMR structure of the amino-terminal domain of the lambda integrase protein in complex with DNA: immobilization of a flexible tail facilitates beta-sheet recognition of the major groove.</title>
        <authorList>
            <person name="Fadeev E.A."/>
            <person name="Sam M.D."/>
            <person name="Clubb R.T."/>
        </authorList>
    </citation>
    <scope>STRUCTURE BY NMR OF 1-64</scope>
</reference>
<sequence length="356" mass="40304">MGRRRSHERRDLPPNLYIRNNGYYCYRDPRTGKEFGLGRDRRIAITEAIQANIELFSGHKHKPLTARINSDNSVTLHSWLDRYEKILASRGIKQKTLINYMSKIKAIRRGLPDAPLEDITTKEIAAMLNGYIDEGKAASAKLIRSTLSDAFREAIAEGHITTNHVAATRAAKSEVRRSRLTADEYLKIYQAAESSPCWLRLAMELAVVTGQRVGDLCEMKWSDIVDGYLYVEQSKTGVKIAIPTALHIDALGISMKETLDKCKEILGGETIIASTRREPLSSGTVSRYFMRARKASGLSFEGDPPTFHELRSLSARLYEKQISDKFAQHLLGHKSDTMASQYRDDRGREWDKIEIK</sequence>
<organismHost>
    <name type="scientific">Escherichia coli</name>
    <dbReference type="NCBI Taxonomy" id="562"/>
</organismHost>
<proteinExistence type="evidence at protein level"/>
<evidence type="ECO:0000255" key="1">
    <source>
        <dbReference type="PROSITE-ProRule" id="PRU01246"/>
    </source>
</evidence>
<evidence type="ECO:0000255" key="2">
    <source>
        <dbReference type="PROSITE-ProRule" id="PRU01248"/>
    </source>
</evidence>
<evidence type="ECO:0000269" key="3">
    <source>
    </source>
</evidence>
<evidence type="ECO:0000269" key="4">
    <source>
    </source>
</evidence>
<evidence type="ECO:0000269" key="5">
    <source>
    </source>
</evidence>
<evidence type="ECO:0000303" key="6">
    <source>
    </source>
</evidence>
<evidence type="ECO:0000305" key="7"/>
<evidence type="ECO:0007744" key="8">
    <source>
        <dbReference type="PDB" id="1P7D"/>
    </source>
</evidence>
<evidence type="ECO:0007744" key="9">
    <source>
        <dbReference type="PDB" id="1Z19"/>
    </source>
</evidence>
<evidence type="ECO:0007744" key="10">
    <source>
        <dbReference type="PDB" id="1Z1B"/>
    </source>
</evidence>
<evidence type="ECO:0007829" key="11">
    <source>
        <dbReference type="PDB" id="1AE9"/>
    </source>
</evidence>
<evidence type="ECO:0007829" key="12">
    <source>
        <dbReference type="PDB" id="1KJK"/>
    </source>
</evidence>
<evidence type="ECO:0007829" key="13">
    <source>
        <dbReference type="PDB" id="1Z19"/>
    </source>
</evidence>
<evidence type="ECO:0007829" key="14">
    <source>
        <dbReference type="PDB" id="2OXO"/>
    </source>
</evidence>
<evidence type="ECO:0007829" key="15">
    <source>
        <dbReference type="PDB" id="2WCC"/>
    </source>
</evidence>
<gene>
    <name type="primary">int</name>
</gene>
<organism>
    <name type="scientific">Escherichia phage lambda</name>
    <name type="common">Bacteriophage lambda</name>
    <dbReference type="NCBI Taxonomy" id="2681611"/>
    <lineage>
        <taxon>Viruses</taxon>
        <taxon>Duplodnaviria</taxon>
        <taxon>Heunggongvirae</taxon>
        <taxon>Uroviricota</taxon>
        <taxon>Caudoviricetes</taxon>
        <taxon>Lambdavirus</taxon>
        <taxon>Lambdavirus lambda</taxon>
    </lineage>
</organism>
<comment type="function">
    <text evidence="4 6">Integrase is necessary for integration of the phage into the host genome by site-specific recombination. In conjunction with excisionase, integrase is also necessary for excision of the prophage from the host genome.</text>
</comment>
<comment type="subunit">
    <text evidence="3 5">Homotetramer. Interacts (via N-terminus) with the excisionase (via C-terminus) (PubMed:12832614). Part of the excision complex made of the integrase tetramer, IHF, Fis and Xis.</text>
</comment>
<comment type="similarity">
    <text evidence="7">Belongs to the 'phage' integrase family.</text>
</comment>
<keyword id="KW-0002">3D-structure</keyword>
<keyword id="KW-0229">DNA integration</keyword>
<keyword id="KW-0233">DNA recombination</keyword>
<keyword id="KW-0238">DNA-binding</keyword>
<keyword id="KW-0378">Hydrolase</keyword>
<keyword id="KW-1185">Reference proteome</keyword>
<keyword id="KW-0808">Transferase</keyword>
<keyword id="KW-1250">Viral genome excision</keyword>
<keyword id="KW-1179">Viral genome integration</keyword>
<keyword id="KW-1160">Virus entry into host cell</keyword>
<accession>P03700</accession>
<feature type="chain" id="PRO_0000197527" description="Integrase">
    <location>
        <begin position="1"/>
        <end position="356"/>
    </location>
</feature>
<feature type="domain" description="Core-binding (CB)" evidence="2">
    <location>
        <begin position="74"/>
        <end position="155"/>
    </location>
</feature>
<feature type="domain" description="Tyr recombinase" evidence="1">
    <location>
        <begin position="175"/>
        <end position="355"/>
    </location>
</feature>
<feature type="active site" evidence="1">
    <location>
        <position position="212"/>
    </location>
</feature>
<feature type="active site" evidence="1">
    <location>
        <position position="235"/>
    </location>
</feature>
<feature type="active site" evidence="1">
    <location>
        <position position="308"/>
    </location>
</feature>
<feature type="active site" evidence="1">
    <location>
        <position position="311"/>
    </location>
</feature>
<feature type="active site" evidence="1">
    <location>
        <position position="333"/>
    </location>
</feature>
<feature type="active site" description="O-(3'-phospho-DNA)-tyrosine intermediate" evidence="1 8 9 10">
    <location>
        <position position="342"/>
    </location>
</feature>
<feature type="mutagenesis site" description="Complete loss of interaction with the integrase." evidence="3">
    <original>E</original>
    <variation>A</variation>
    <location>
        <position position="47"/>
    </location>
</feature>
<feature type="sequence conflict" description="In Ref. 3." evidence="7" ref="3">
    <original>D</original>
    <variation>V</variation>
    <location>
        <position position="118"/>
    </location>
</feature>
<feature type="helix" evidence="15">
    <location>
        <begin position="9"/>
        <end position="11"/>
    </location>
</feature>
<feature type="strand" evidence="12">
    <location>
        <begin position="16"/>
        <end position="18"/>
    </location>
</feature>
<feature type="strand" evidence="12">
    <location>
        <begin position="24"/>
        <end position="27"/>
    </location>
</feature>
<feature type="turn" evidence="12">
    <location>
        <begin position="29"/>
        <end position="31"/>
    </location>
</feature>
<feature type="strand" evidence="12">
    <location>
        <begin position="34"/>
        <end position="39"/>
    </location>
</feature>
<feature type="helix" evidence="12">
    <location>
        <begin position="41"/>
        <end position="57"/>
    </location>
</feature>
<feature type="helix" evidence="14">
    <location>
        <begin position="76"/>
        <end position="90"/>
    </location>
</feature>
<feature type="helix" evidence="14">
    <location>
        <begin position="94"/>
        <end position="110"/>
    </location>
</feature>
<feature type="helix" evidence="14">
    <location>
        <begin position="116"/>
        <end position="118"/>
    </location>
</feature>
<feature type="helix" evidence="14">
    <location>
        <begin position="121"/>
        <end position="133"/>
    </location>
</feature>
<feature type="helix" evidence="14">
    <location>
        <begin position="137"/>
        <end position="156"/>
    </location>
</feature>
<feature type="turn" evidence="13">
    <location>
        <begin position="164"/>
        <end position="167"/>
    </location>
</feature>
<feature type="helix" evidence="11">
    <location>
        <begin position="182"/>
        <end position="191"/>
    </location>
</feature>
<feature type="helix" evidence="11">
    <location>
        <begin position="192"/>
        <end position="194"/>
    </location>
</feature>
<feature type="helix" evidence="11">
    <location>
        <begin position="198"/>
        <end position="209"/>
    </location>
</feature>
<feature type="helix" evidence="11">
    <location>
        <begin position="213"/>
        <end position="218"/>
    </location>
</feature>
<feature type="helix" evidence="11">
    <location>
        <begin position="221"/>
        <end position="223"/>
    </location>
</feature>
<feature type="strand" evidence="11">
    <location>
        <begin position="228"/>
        <end position="232"/>
    </location>
</feature>
<feature type="turn" evidence="11">
    <location>
        <begin position="234"/>
        <end position="236"/>
    </location>
</feature>
<feature type="strand" evidence="11">
    <location>
        <begin position="239"/>
        <end position="243"/>
    </location>
</feature>
<feature type="turn" evidence="11">
    <location>
        <begin position="249"/>
        <end position="252"/>
    </location>
</feature>
<feature type="helix" evidence="11">
    <location>
        <begin position="255"/>
        <end position="265"/>
    </location>
</feature>
<feature type="strand" evidence="11">
    <location>
        <begin position="269"/>
        <end position="272"/>
    </location>
</feature>
<feature type="helix" evidence="11">
    <location>
        <begin position="282"/>
        <end position="296"/>
    </location>
</feature>
<feature type="strand" evidence="11">
    <location>
        <begin position="301"/>
        <end position="303"/>
    </location>
</feature>
<feature type="helix" evidence="11">
    <location>
        <begin position="309"/>
        <end position="321"/>
    </location>
</feature>
<feature type="helix" evidence="11">
    <location>
        <begin position="324"/>
        <end position="331"/>
    </location>
</feature>
<feature type="strand" evidence="13">
    <location>
        <begin position="334"/>
        <end position="336"/>
    </location>
</feature>
<feature type="helix" evidence="13">
    <location>
        <begin position="339"/>
        <end position="342"/>
    </location>
</feature>
<feature type="strand" evidence="11">
    <location>
        <begin position="349"/>
        <end position="352"/>
    </location>
</feature>
<protein>
    <recommendedName>
        <fullName>Integrase</fullName>
        <ecNumber evidence="4">2.7.7.-</ecNumber>
        <ecNumber evidence="4">3.1.-.-</ecNumber>
    </recommendedName>
</protein>
<dbReference type="EC" id="2.7.7.-" evidence="4"/>
<dbReference type="EC" id="3.1.-.-" evidence="4"/>
<dbReference type="EMBL" id="J02459">
    <property type="protein sequence ID" value="AAA96562.1"/>
    <property type="molecule type" value="Genomic_DNA"/>
</dbReference>
<dbReference type="PIR" id="A04322">
    <property type="entry name" value="RSBPIL"/>
</dbReference>
<dbReference type="RefSeq" id="NP_040609.1">
    <property type="nucleotide sequence ID" value="NC_001416.1"/>
</dbReference>
<dbReference type="PDB" id="1AE9">
    <property type="method" value="X-ray"/>
    <property type="resolution" value="1.90 A"/>
    <property type="chains" value="A/B=177-355"/>
</dbReference>
<dbReference type="PDB" id="1KJK">
    <property type="method" value="NMR"/>
    <property type="chains" value="A=1-64"/>
</dbReference>
<dbReference type="PDB" id="1P7D">
    <property type="method" value="X-ray"/>
    <property type="resolution" value="2.95 A"/>
    <property type="chains" value="A/B=74-356"/>
</dbReference>
<dbReference type="PDB" id="1Z19">
    <property type="method" value="X-ray"/>
    <property type="resolution" value="2.80 A"/>
    <property type="chains" value="A/B=74-356"/>
</dbReference>
<dbReference type="PDB" id="1Z1B">
    <property type="method" value="X-ray"/>
    <property type="resolution" value="3.80 A"/>
    <property type="chains" value="A/B=1-356"/>
</dbReference>
<dbReference type="PDB" id="1Z1G">
    <property type="method" value="X-ray"/>
    <property type="resolution" value="4.40 A"/>
    <property type="chains" value="A/B/C/D=1-356"/>
</dbReference>
<dbReference type="PDB" id="2OXO">
    <property type="method" value="X-ray"/>
    <property type="resolution" value="2.00 A"/>
    <property type="chains" value="A=75-176"/>
</dbReference>
<dbReference type="PDB" id="2WCC">
    <property type="method" value="NMR"/>
    <property type="chains" value="3=1-64"/>
</dbReference>
<dbReference type="PDB" id="5J0N">
    <property type="method" value="EM"/>
    <property type="resolution" value="11.00 A"/>
    <property type="chains" value="E/F/G/H=1-356"/>
</dbReference>
<dbReference type="PDBsum" id="1AE9"/>
<dbReference type="PDBsum" id="1KJK"/>
<dbReference type="PDBsum" id="1P7D"/>
<dbReference type="PDBsum" id="1Z19"/>
<dbReference type="PDBsum" id="1Z1B"/>
<dbReference type="PDBsum" id="1Z1G"/>
<dbReference type="PDBsum" id="2OXO"/>
<dbReference type="PDBsum" id="2WCC"/>
<dbReference type="PDBsum" id="5J0N"/>
<dbReference type="SMR" id="P03700"/>
<dbReference type="DIP" id="DIP-41000N"/>
<dbReference type="IntAct" id="P03700">
    <property type="interactions" value="10"/>
</dbReference>
<dbReference type="GeneID" id="2703464"/>
<dbReference type="KEGG" id="vg:2703470"/>
<dbReference type="EvolutionaryTrace" id="P03700"/>
<dbReference type="Proteomes" id="UP000001711">
    <property type="component" value="Genome"/>
</dbReference>
<dbReference type="GO" id="GO:0003677">
    <property type="term" value="F:DNA binding"/>
    <property type="evidence" value="ECO:0007669"/>
    <property type="project" value="UniProtKB-KW"/>
</dbReference>
<dbReference type="GO" id="GO:0016787">
    <property type="term" value="F:hydrolase activity"/>
    <property type="evidence" value="ECO:0007669"/>
    <property type="project" value="UniProtKB-KW"/>
</dbReference>
<dbReference type="GO" id="GO:0008907">
    <property type="term" value="F:integrase activity"/>
    <property type="evidence" value="ECO:0007669"/>
    <property type="project" value="InterPro"/>
</dbReference>
<dbReference type="GO" id="GO:0016740">
    <property type="term" value="F:transferase activity"/>
    <property type="evidence" value="ECO:0007669"/>
    <property type="project" value="UniProtKB-KW"/>
</dbReference>
<dbReference type="GO" id="GO:0015074">
    <property type="term" value="P:DNA integration"/>
    <property type="evidence" value="ECO:0000314"/>
    <property type="project" value="CACAO"/>
</dbReference>
<dbReference type="GO" id="GO:0006310">
    <property type="term" value="P:DNA recombination"/>
    <property type="evidence" value="ECO:0007669"/>
    <property type="project" value="UniProtKB-KW"/>
</dbReference>
<dbReference type="GO" id="GO:0075713">
    <property type="term" value="P:establishment of integrated proviral latency"/>
    <property type="evidence" value="ECO:0007669"/>
    <property type="project" value="UniProtKB-KW"/>
</dbReference>
<dbReference type="GO" id="GO:0032359">
    <property type="term" value="P:provirus excision"/>
    <property type="evidence" value="ECO:0007669"/>
    <property type="project" value="UniProtKB-KW"/>
</dbReference>
<dbReference type="GO" id="GO:0046718">
    <property type="term" value="P:symbiont entry into host cell"/>
    <property type="evidence" value="ECO:0007669"/>
    <property type="project" value="UniProtKB-KW"/>
</dbReference>
<dbReference type="GO" id="GO:0044826">
    <property type="term" value="P:viral genome integration into host DNA"/>
    <property type="evidence" value="ECO:0007669"/>
    <property type="project" value="UniProtKB-KW"/>
</dbReference>
<dbReference type="CDD" id="cd00800">
    <property type="entry name" value="INT_Lambda_C"/>
    <property type="match status" value="1"/>
</dbReference>
<dbReference type="FunFam" id="3.30.160.60:FF:001166">
    <property type="entry name" value="Phage integrase"/>
    <property type="match status" value="1"/>
</dbReference>
<dbReference type="Gene3D" id="1.10.150.130">
    <property type="match status" value="1"/>
</dbReference>
<dbReference type="Gene3D" id="3.30.160.60">
    <property type="entry name" value="Classic Zinc Finger"/>
    <property type="match status" value="1"/>
</dbReference>
<dbReference type="Gene3D" id="1.10.443.10">
    <property type="entry name" value="Intergrase catalytic core"/>
    <property type="match status" value="1"/>
</dbReference>
<dbReference type="InterPro" id="IPR044068">
    <property type="entry name" value="CB"/>
</dbReference>
<dbReference type="InterPro" id="IPR016177">
    <property type="entry name" value="DNA-bd_dom_sf"/>
</dbReference>
<dbReference type="InterPro" id="IPR011010">
    <property type="entry name" value="DNA_brk_join_enz"/>
</dbReference>
<dbReference type="InterPro" id="IPR013762">
    <property type="entry name" value="Integrase-like_cat_sf"/>
</dbReference>
<dbReference type="InterPro" id="IPR002104">
    <property type="entry name" value="Integrase_catalytic"/>
</dbReference>
<dbReference type="InterPro" id="IPR015094">
    <property type="entry name" value="Integrase_lambda-typ_DNA-bd_N"/>
</dbReference>
<dbReference type="InterPro" id="IPR010998">
    <property type="entry name" value="Integrase_recombinase_N"/>
</dbReference>
<dbReference type="InterPro" id="IPR004107">
    <property type="entry name" value="Integrase_SAM-like_N"/>
</dbReference>
<dbReference type="InterPro" id="IPR050808">
    <property type="entry name" value="Phage_Integrase"/>
</dbReference>
<dbReference type="PANTHER" id="PTHR30629">
    <property type="entry name" value="PROPHAGE INTEGRASE"/>
    <property type="match status" value="1"/>
</dbReference>
<dbReference type="PANTHER" id="PTHR30629:SF2">
    <property type="entry name" value="PROPHAGE INTEGRASE INTS-RELATED"/>
    <property type="match status" value="1"/>
</dbReference>
<dbReference type="Pfam" id="PF09003">
    <property type="entry name" value="Arm-DNA-bind_1"/>
    <property type="match status" value="1"/>
</dbReference>
<dbReference type="Pfam" id="PF02899">
    <property type="entry name" value="Phage_int_SAM_1"/>
    <property type="match status" value="1"/>
</dbReference>
<dbReference type="Pfam" id="PF00589">
    <property type="entry name" value="Phage_integrase"/>
    <property type="match status" value="1"/>
</dbReference>
<dbReference type="SUPFAM" id="SSF56349">
    <property type="entry name" value="DNA breaking-rejoining enzymes"/>
    <property type="match status" value="1"/>
</dbReference>
<dbReference type="SUPFAM" id="SSF54171">
    <property type="entry name" value="DNA-binding domain"/>
    <property type="match status" value="1"/>
</dbReference>
<dbReference type="PROSITE" id="PS51900">
    <property type="entry name" value="CB"/>
    <property type="match status" value="1"/>
</dbReference>
<dbReference type="PROSITE" id="PS51898">
    <property type="entry name" value="TYR_RECOMBINASE"/>
    <property type="match status" value="1"/>
</dbReference>